<protein>
    <recommendedName>
        <fullName>DNA polymerase I</fullName>
        <shortName>POL I</shortName>
        <ecNumber evidence="1 2">2.7.7.7</ecNumber>
    </recommendedName>
</protein>
<name>DPO1_GEOSE</name>
<organism>
    <name type="scientific">Geobacillus stearothermophilus</name>
    <name type="common">Bacillus stearothermophilus</name>
    <dbReference type="NCBI Taxonomy" id="1422"/>
    <lineage>
        <taxon>Bacteria</taxon>
        <taxon>Bacillati</taxon>
        <taxon>Bacillota</taxon>
        <taxon>Bacilli</taxon>
        <taxon>Bacillales</taxon>
        <taxon>Anoxybacillaceae</taxon>
        <taxon>Geobacillus</taxon>
    </lineage>
</organism>
<gene>
    <name type="primary">polA</name>
    <name type="synonym">pol</name>
</gene>
<evidence type="ECO:0000269" key="1">
    <source>
    </source>
</evidence>
<evidence type="ECO:0000269" key="2">
    <source>
    </source>
</evidence>
<evidence type="ECO:0000305" key="3"/>
<evidence type="ECO:0007829" key="4">
    <source>
        <dbReference type="PDB" id="1NK4"/>
    </source>
</evidence>
<evidence type="ECO:0007829" key="5">
    <source>
        <dbReference type="PDB" id="1U4B"/>
    </source>
</evidence>
<evidence type="ECO:0007829" key="6">
    <source>
        <dbReference type="PDB" id="1XWL"/>
    </source>
</evidence>
<evidence type="ECO:0007829" key="7">
    <source>
        <dbReference type="PDB" id="2BDP"/>
    </source>
</evidence>
<proteinExistence type="evidence at protein level"/>
<dbReference type="EC" id="2.7.7.7" evidence="1 2"/>
<dbReference type="EMBL" id="U23149">
    <property type="protein sequence ID" value="AAA85558.1"/>
    <property type="status" value="ALT_INIT"/>
    <property type="molecule type" value="Genomic_DNA"/>
</dbReference>
<dbReference type="EMBL" id="L42111">
    <property type="protein sequence ID" value="AAC37139.1"/>
    <property type="molecule type" value="Genomic_DNA"/>
</dbReference>
<dbReference type="PIR" id="JC4286">
    <property type="entry name" value="JC4286"/>
</dbReference>
<dbReference type="PIR" id="S70368">
    <property type="entry name" value="S70368"/>
</dbReference>
<dbReference type="PDB" id="1L3S">
    <property type="method" value="X-ray"/>
    <property type="resolution" value="1.70 A"/>
    <property type="chains" value="A=301-876"/>
</dbReference>
<dbReference type="PDB" id="1L3T">
    <property type="method" value="X-ray"/>
    <property type="resolution" value="1.70 A"/>
    <property type="chains" value="A=301-876"/>
</dbReference>
<dbReference type="PDB" id="1L3U">
    <property type="method" value="X-ray"/>
    <property type="resolution" value="1.80 A"/>
    <property type="chains" value="A=301-876"/>
</dbReference>
<dbReference type="PDB" id="1L3V">
    <property type="method" value="X-ray"/>
    <property type="resolution" value="1.71 A"/>
    <property type="chains" value="A=301-876"/>
</dbReference>
<dbReference type="PDB" id="1L5U">
    <property type="method" value="X-ray"/>
    <property type="resolution" value="1.95 A"/>
    <property type="chains" value="A=301-876"/>
</dbReference>
<dbReference type="PDB" id="1LV5">
    <property type="method" value="X-ray"/>
    <property type="resolution" value="1.95 A"/>
    <property type="chains" value="A/B=301-876"/>
</dbReference>
<dbReference type="PDB" id="1NJX">
    <property type="method" value="X-ray"/>
    <property type="resolution" value="1.65 A"/>
    <property type="chains" value="A=301-876"/>
</dbReference>
<dbReference type="PDB" id="1NJY">
    <property type="method" value="X-ray"/>
    <property type="resolution" value="2.00 A"/>
    <property type="chains" value="A=301-876"/>
</dbReference>
<dbReference type="PDB" id="1NJZ">
    <property type="method" value="X-ray"/>
    <property type="resolution" value="2.00 A"/>
    <property type="chains" value="A=301-876"/>
</dbReference>
<dbReference type="PDB" id="1NK0">
    <property type="method" value="X-ray"/>
    <property type="resolution" value="1.70 A"/>
    <property type="chains" value="A=301-876"/>
</dbReference>
<dbReference type="PDB" id="1NK4">
    <property type="method" value="X-ray"/>
    <property type="resolution" value="1.60 A"/>
    <property type="chains" value="A=301-876"/>
</dbReference>
<dbReference type="PDB" id="1NK5">
    <property type="method" value="X-ray"/>
    <property type="resolution" value="2.10 A"/>
    <property type="chains" value="A=301-876"/>
</dbReference>
<dbReference type="PDB" id="1NK6">
    <property type="method" value="X-ray"/>
    <property type="resolution" value="2.10 A"/>
    <property type="chains" value="A=301-876"/>
</dbReference>
<dbReference type="PDB" id="1NK7">
    <property type="method" value="X-ray"/>
    <property type="resolution" value="1.90 A"/>
    <property type="chains" value="A=301-876"/>
</dbReference>
<dbReference type="PDB" id="1NK8">
    <property type="method" value="X-ray"/>
    <property type="resolution" value="1.90 A"/>
    <property type="chains" value="A=301-876"/>
</dbReference>
<dbReference type="PDB" id="1NK9">
    <property type="method" value="X-ray"/>
    <property type="resolution" value="1.90 A"/>
    <property type="chains" value="A=301-876"/>
</dbReference>
<dbReference type="PDB" id="1NKB">
    <property type="method" value="X-ray"/>
    <property type="resolution" value="2.00 A"/>
    <property type="chains" value="A=301-876"/>
</dbReference>
<dbReference type="PDB" id="1NKC">
    <property type="method" value="X-ray"/>
    <property type="resolution" value="1.80 A"/>
    <property type="chains" value="A=301-876"/>
</dbReference>
<dbReference type="PDB" id="1NKE">
    <property type="method" value="X-ray"/>
    <property type="resolution" value="1.80 A"/>
    <property type="chains" value="A=301-876"/>
</dbReference>
<dbReference type="PDB" id="1U45">
    <property type="method" value="X-ray"/>
    <property type="resolution" value="2.01 A"/>
    <property type="chains" value="A=301-876"/>
</dbReference>
<dbReference type="PDB" id="1U47">
    <property type="method" value="X-ray"/>
    <property type="resolution" value="2.00 A"/>
    <property type="chains" value="A=301-876"/>
</dbReference>
<dbReference type="PDB" id="1U48">
    <property type="method" value="X-ray"/>
    <property type="resolution" value="2.10 A"/>
    <property type="chains" value="A=301-876"/>
</dbReference>
<dbReference type="PDB" id="1U49">
    <property type="method" value="X-ray"/>
    <property type="resolution" value="2.15 A"/>
    <property type="chains" value="A=301-876"/>
</dbReference>
<dbReference type="PDB" id="1U4B">
    <property type="method" value="X-ray"/>
    <property type="resolution" value="1.60 A"/>
    <property type="chains" value="A=301-876"/>
</dbReference>
<dbReference type="PDB" id="1UA1">
    <property type="method" value="X-ray"/>
    <property type="resolution" value="2.00 A"/>
    <property type="chains" value="A=301-876"/>
</dbReference>
<dbReference type="PDB" id="1XC9">
    <property type="method" value="X-ray"/>
    <property type="resolution" value="1.90 A"/>
    <property type="chains" value="A=301-876"/>
</dbReference>
<dbReference type="PDB" id="1XWL">
    <property type="method" value="X-ray"/>
    <property type="resolution" value="1.70 A"/>
    <property type="chains" value="A=297-876"/>
</dbReference>
<dbReference type="PDB" id="2BDP">
    <property type="method" value="X-ray"/>
    <property type="resolution" value="1.80 A"/>
    <property type="chains" value="A=297-876"/>
</dbReference>
<dbReference type="PDB" id="3BDP">
    <property type="method" value="X-ray"/>
    <property type="resolution" value="1.90 A"/>
    <property type="chains" value="A=297-876"/>
</dbReference>
<dbReference type="PDB" id="3EYZ">
    <property type="method" value="X-ray"/>
    <property type="resolution" value="2.10 A"/>
    <property type="chains" value="A=304-876"/>
</dbReference>
<dbReference type="PDB" id="3EZ5">
    <property type="method" value="X-ray"/>
    <property type="resolution" value="1.90 A"/>
    <property type="chains" value="A/D=304-876"/>
</dbReference>
<dbReference type="PDB" id="4BDP">
    <property type="method" value="X-ray"/>
    <property type="resolution" value="1.80 A"/>
    <property type="chains" value="A=297-876"/>
</dbReference>
<dbReference type="PDBsum" id="1L3S"/>
<dbReference type="PDBsum" id="1L3T"/>
<dbReference type="PDBsum" id="1L3U"/>
<dbReference type="PDBsum" id="1L3V"/>
<dbReference type="PDBsum" id="1L5U"/>
<dbReference type="PDBsum" id="1LV5"/>
<dbReference type="PDBsum" id="1NJX"/>
<dbReference type="PDBsum" id="1NJY"/>
<dbReference type="PDBsum" id="1NJZ"/>
<dbReference type="PDBsum" id="1NK0"/>
<dbReference type="PDBsum" id="1NK4"/>
<dbReference type="PDBsum" id="1NK5"/>
<dbReference type="PDBsum" id="1NK6"/>
<dbReference type="PDBsum" id="1NK7"/>
<dbReference type="PDBsum" id="1NK8"/>
<dbReference type="PDBsum" id="1NK9"/>
<dbReference type="PDBsum" id="1NKB"/>
<dbReference type="PDBsum" id="1NKC"/>
<dbReference type="PDBsum" id="1NKE"/>
<dbReference type="PDBsum" id="1U45"/>
<dbReference type="PDBsum" id="1U47"/>
<dbReference type="PDBsum" id="1U48"/>
<dbReference type="PDBsum" id="1U49"/>
<dbReference type="PDBsum" id="1U4B"/>
<dbReference type="PDBsum" id="1UA1"/>
<dbReference type="PDBsum" id="1XC9"/>
<dbReference type="PDBsum" id="1XWL"/>
<dbReference type="PDBsum" id="2BDP"/>
<dbReference type="PDBsum" id="3BDP"/>
<dbReference type="PDBsum" id="3EYZ"/>
<dbReference type="PDBsum" id="3EZ5"/>
<dbReference type="PDBsum" id="4BDP"/>
<dbReference type="SMR" id="P52026"/>
<dbReference type="DrugBank" id="DB07435">
    <property type="generic name" value="1,2,3-TRIHYDROXY-1,2,3,4-TETRAHYDROBENZO[A]PYRENE"/>
</dbReference>
<dbReference type="BRENDA" id="2.7.7.7">
    <property type="organism ID" value="623"/>
</dbReference>
<dbReference type="EvolutionaryTrace" id="P52026"/>
<dbReference type="GO" id="GO:0008408">
    <property type="term" value="F:3'-5' exonuclease activity"/>
    <property type="evidence" value="ECO:0007669"/>
    <property type="project" value="InterPro"/>
</dbReference>
<dbReference type="GO" id="GO:0008409">
    <property type="term" value="F:5'-3' exonuclease activity"/>
    <property type="evidence" value="ECO:0007669"/>
    <property type="project" value="InterPro"/>
</dbReference>
<dbReference type="GO" id="GO:0003677">
    <property type="term" value="F:DNA binding"/>
    <property type="evidence" value="ECO:0007669"/>
    <property type="project" value="UniProtKB-KW"/>
</dbReference>
<dbReference type="GO" id="GO:0003887">
    <property type="term" value="F:DNA-directed DNA polymerase activity"/>
    <property type="evidence" value="ECO:0007669"/>
    <property type="project" value="UniProtKB-KW"/>
</dbReference>
<dbReference type="GO" id="GO:0006261">
    <property type="term" value="P:DNA-templated DNA replication"/>
    <property type="evidence" value="ECO:0007669"/>
    <property type="project" value="InterPro"/>
</dbReference>
<dbReference type="GO" id="GO:0006302">
    <property type="term" value="P:double-strand break repair"/>
    <property type="evidence" value="ECO:0007669"/>
    <property type="project" value="TreeGrafter"/>
</dbReference>
<dbReference type="CDD" id="cd08637">
    <property type="entry name" value="DNA_pol_A_pol_I_C"/>
    <property type="match status" value="1"/>
</dbReference>
<dbReference type="CDD" id="cd06140">
    <property type="entry name" value="DNA_polA_I_Bacillus_like_exo"/>
    <property type="match status" value="1"/>
</dbReference>
<dbReference type="CDD" id="cd09898">
    <property type="entry name" value="H3TH_53EXO"/>
    <property type="match status" value="1"/>
</dbReference>
<dbReference type="CDD" id="cd09859">
    <property type="entry name" value="PIN_53EXO"/>
    <property type="match status" value="1"/>
</dbReference>
<dbReference type="FunFam" id="1.10.150.20:FF:000002">
    <property type="entry name" value="DNA polymerase I"/>
    <property type="match status" value="1"/>
</dbReference>
<dbReference type="FunFam" id="1.10.150.20:FF:000003">
    <property type="entry name" value="DNA polymerase I"/>
    <property type="match status" value="1"/>
</dbReference>
<dbReference type="FunFam" id="1.20.1060.10:FF:000001">
    <property type="entry name" value="DNA polymerase I"/>
    <property type="match status" value="1"/>
</dbReference>
<dbReference type="FunFam" id="3.40.50.1010:FF:000001">
    <property type="entry name" value="DNA polymerase I"/>
    <property type="match status" value="1"/>
</dbReference>
<dbReference type="Gene3D" id="3.30.70.370">
    <property type="match status" value="1"/>
</dbReference>
<dbReference type="Gene3D" id="1.10.150.20">
    <property type="entry name" value="5' to 3' exonuclease, C-terminal subdomain"/>
    <property type="match status" value="2"/>
</dbReference>
<dbReference type="Gene3D" id="3.40.50.1010">
    <property type="entry name" value="5'-nuclease"/>
    <property type="match status" value="1"/>
</dbReference>
<dbReference type="Gene3D" id="3.30.420.10">
    <property type="entry name" value="Ribonuclease H-like superfamily/Ribonuclease H"/>
    <property type="match status" value="1"/>
</dbReference>
<dbReference type="Gene3D" id="1.20.1060.10">
    <property type="entry name" value="Taq DNA Polymerase, Chain T, domain 4"/>
    <property type="match status" value="1"/>
</dbReference>
<dbReference type="InterPro" id="IPR002562">
    <property type="entry name" value="3'-5'_exonuclease_dom"/>
</dbReference>
<dbReference type="InterPro" id="IPR020046">
    <property type="entry name" value="5-3_exonucl_a-hlix_arch_N"/>
</dbReference>
<dbReference type="InterPro" id="IPR002421">
    <property type="entry name" value="5-3_exonuclease"/>
</dbReference>
<dbReference type="InterPro" id="IPR036279">
    <property type="entry name" value="5-3_exonuclease_C_sf"/>
</dbReference>
<dbReference type="InterPro" id="IPR019760">
    <property type="entry name" value="DNA-dir_DNA_pol_A_CS"/>
</dbReference>
<dbReference type="InterPro" id="IPR001098">
    <property type="entry name" value="DNA-dir_DNA_pol_A_palm_dom"/>
</dbReference>
<dbReference type="InterPro" id="IPR043502">
    <property type="entry name" value="DNA/RNA_pol_sf"/>
</dbReference>
<dbReference type="InterPro" id="IPR054690">
    <property type="entry name" value="DNA_polI_exonuclease"/>
</dbReference>
<dbReference type="InterPro" id="IPR020045">
    <property type="entry name" value="DNA_polI_H3TH"/>
</dbReference>
<dbReference type="InterPro" id="IPR018320">
    <property type="entry name" value="DNA_polymerase_1"/>
</dbReference>
<dbReference type="InterPro" id="IPR002298">
    <property type="entry name" value="DNA_polymerase_A"/>
</dbReference>
<dbReference type="InterPro" id="IPR008918">
    <property type="entry name" value="HhH2"/>
</dbReference>
<dbReference type="InterPro" id="IPR029060">
    <property type="entry name" value="PIN-like_dom_sf"/>
</dbReference>
<dbReference type="InterPro" id="IPR012337">
    <property type="entry name" value="RNaseH-like_sf"/>
</dbReference>
<dbReference type="InterPro" id="IPR036397">
    <property type="entry name" value="RNaseH_sf"/>
</dbReference>
<dbReference type="NCBIfam" id="TIGR00593">
    <property type="entry name" value="pola"/>
    <property type="match status" value="1"/>
</dbReference>
<dbReference type="NCBIfam" id="NF004397">
    <property type="entry name" value="PRK05755.1"/>
    <property type="match status" value="1"/>
</dbReference>
<dbReference type="PANTHER" id="PTHR10133">
    <property type="entry name" value="DNA POLYMERASE I"/>
    <property type="match status" value="1"/>
</dbReference>
<dbReference type="PANTHER" id="PTHR10133:SF27">
    <property type="entry name" value="DNA POLYMERASE NU"/>
    <property type="match status" value="1"/>
</dbReference>
<dbReference type="Pfam" id="PF01367">
    <property type="entry name" value="5_3_exonuc"/>
    <property type="match status" value="1"/>
</dbReference>
<dbReference type="Pfam" id="PF02739">
    <property type="entry name" value="5_3_exonuc_N"/>
    <property type="match status" value="1"/>
</dbReference>
<dbReference type="Pfam" id="PF00476">
    <property type="entry name" value="DNA_pol_A"/>
    <property type="match status" value="1"/>
</dbReference>
<dbReference type="Pfam" id="PF22619">
    <property type="entry name" value="DNA_polI_exo1"/>
    <property type="match status" value="1"/>
</dbReference>
<dbReference type="PRINTS" id="PR00868">
    <property type="entry name" value="DNAPOLI"/>
</dbReference>
<dbReference type="SMART" id="SM00474">
    <property type="entry name" value="35EXOc"/>
    <property type="match status" value="1"/>
</dbReference>
<dbReference type="SMART" id="SM00475">
    <property type="entry name" value="53EXOc"/>
    <property type="match status" value="1"/>
</dbReference>
<dbReference type="SMART" id="SM00279">
    <property type="entry name" value="HhH2"/>
    <property type="match status" value="1"/>
</dbReference>
<dbReference type="SMART" id="SM00482">
    <property type="entry name" value="POLAc"/>
    <property type="match status" value="1"/>
</dbReference>
<dbReference type="SUPFAM" id="SSF47807">
    <property type="entry name" value="5' to 3' exonuclease, C-terminal subdomain"/>
    <property type="match status" value="1"/>
</dbReference>
<dbReference type="SUPFAM" id="SSF56672">
    <property type="entry name" value="DNA/RNA polymerases"/>
    <property type="match status" value="1"/>
</dbReference>
<dbReference type="SUPFAM" id="SSF88723">
    <property type="entry name" value="PIN domain-like"/>
    <property type="match status" value="1"/>
</dbReference>
<dbReference type="SUPFAM" id="SSF53098">
    <property type="entry name" value="Ribonuclease H-like"/>
    <property type="match status" value="1"/>
</dbReference>
<dbReference type="PROSITE" id="PS00447">
    <property type="entry name" value="DNA_POLYMERASE_A"/>
    <property type="match status" value="1"/>
</dbReference>
<accession>P52026</accession>
<reference key="1">
    <citation type="journal article" date="1995" name="Gene">
        <title>Cloning and complete sequence of the DNA polymerase-encoding gene (BstpolI) and characterisation of the Klenow-like fragment from Bacillus stearothermophilus.</title>
        <authorList>
            <person name="Phang S.M."/>
            <person name="Teo C.Y."/>
            <person name="Lo E."/>
            <person name="Wong V.W."/>
        </authorList>
    </citation>
    <scope>NUCLEOTIDE SEQUENCE [GENOMIC DNA]</scope>
</reference>
<reference key="2">
    <citation type="journal article" date="1996" name="Biochim. Biophys. Acta">
        <title>Construction of single amino acid substitution mutants of cloned Bacillus stearothermophilus DNA polymerase I which lack 5'-3' exonuclease activity.</title>
        <authorList>
            <person name="Riggs M.G."/>
            <person name="Tudor S."/>
            <person name="Sivaram M."/>
            <person name="McDonough S.H."/>
        </authorList>
    </citation>
    <scope>NUCLEOTIDE SEQUENCE [GENOMIC DNA]</scope>
    <scope>PROTEIN SEQUENCE OF 1-5 AND 289-293</scope>
    <scope>FUNCTION</scope>
    <scope>CATALYTIC ACTIVITY</scope>
    <scope>MUTAGENESIS TO REMOVE 5'-3' EXONUCLEASE ACTIVITY</scope>
    <source>
        <strain>ATCC 12980 / DSM 22 / CCM 2062 / JCM 2501 / NBRC 12550 / NCIMB 8923 / NCTC 10339 / R-35646 / VKM B-510</strain>
    </source>
</reference>
<reference key="3">
    <citation type="journal article" date="1997" name="Structure">
        <title>Crystal structure of a thermostable Bacillus DNA polymerase I large fragment at 2.1-A resolution.</title>
        <authorList>
            <person name="Kiefer J.R."/>
            <person name="Mao C."/>
            <person name="Hansen C.J."/>
            <person name="Basehore S.L."/>
            <person name="Hogrefe H.H."/>
            <person name="Braman J.C."/>
            <person name="Beese L.S."/>
        </authorList>
    </citation>
    <scope>X-RAY CRYSTALLOGRAPHY (2.1 ANGSTROMS) OF 297-876</scope>
    <scope>FUNCTION</scope>
    <scope>CATALYTIC ACTIVITY</scope>
    <scope>BIOPHYSICOCHEMICAL PROPERTIES</scope>
    <source>
        <strain>X</strain>
    </source>
</reference>
<reference key="4">
    <citation type="journal article" date="1998" name="Nature">
        <title>Visualizing DNA replication in a catalytically active Bacillus DNA polymerase crystal.</title>
        <authorList>
            <person name="Kiefer J.R."/>
            <person name="Mao C."/>
            <person name="Braman J.C."/>
            <person name="Beese L.S."/>
        </authorList>
    </citation>
    <scope>X-RAY CRYSTALLOGRAPHY (1.8 ANGSTROMS) OF 297-876</scope>
    <source>
        <strain>X</strain>
    </source>
</reference>
<feature type="chain" id="PRO_0000101234" description="DNA polymerase I">
    <location>
        <begin position="1"/>
        <end position="876"/>
    </location>
</feature>
<feature type="domain" description="5'-3' exonuclease">
    <location>
        <begin position="1"/>
        <end position="310"/>
    </location>
</feature>
<feature type="region of interest" description="Subtilisin large fragment">
    <location>
        <begin position="289"/>
        <end position="876"/>
    </location>
</feature>
<feature type="region of interest" description="Polymerase">
    <location>
        <begin position="469"/>
        <end position="876"/>
    </location>
</feature>
<feature type="sequence variant" description="In strain: X.">
    <original>G</original>
    <variation>K</variation>
    <location>
        <position position="298"/>
    </location>
</feature>
<feature type="sequence variant" description="In strain: X.">
    <original>D</original>
    <variation>A</variation>
    <location>
        <position position="300"/>
    </location>
</feature>
<feature type="sequence variant" description="In strain: X.">
    <original>AI</original>
    <variation>TL</variation>
    <location>
        <begin position="302"/>
        <end position="303"/>
    </location>
</feature>
<feature type="sequence variant" description="In strain: X.">
    <original>S</original>
    <variation>R</variation>
    <location>
        <position position="306"/>
    </location>
</feature>
<feature type="sequence variant" description="In strain: X.">
    <original>D</original>
    <variation>E</variation>
    <location>
        <position position="309"/>
    </location>
</feature>
<feature type="sequence variant" description="In strain: X.">
    <original>V</original>
    <variation>L</variation>
    <location>
        <position position="320"/>
    </location>
</feature>
<feature type="sequence variant" description="In strain: X.">
    <original>GD</original>
    <variation>EE</variation>
    <location>
        <begin position="324"/>
        <end position="325"/>
    </location>
</feature>
<feature type="sequence variant" description="In strain: X.">
    <original>H</original>
    <variation>D</variation>
    <location>
        <position position="329"/>
    </location>
</feature>
<feature type="sequence variant" description="In strain: X.">
    <original>LA</original>
    <variation>VV</variation>
    <location>
        <begin position="337"/>
        <end position="338"/>
    </location>
</feature>
<feature type="sequence variant" description="In strain: X.">
    <original>R</original>
    <variation>H</variation>
    <location>
        <position position="341"/>
    </location>
</feature>
<feature type="sequence variant" description="In strain: X.">
    <original>K</original>
    <variation>Q</variation>
    <location>
        <position position="356"/>
    </location>
</feature>
<feature type="sequence variant" description="In strain: X.">
    <original>L</original>
    <variation>V</variation>
    <location>
        <position position="358"/>
    </location>
</feature>
<feature type="sequence variant" description="In strain: X.">
    <original>T</original>
    <variation>S</variation>
    <location>
        <position position="369"/>
    </location>
</feature>
<feature type="sequence variant" description="In strain: X.">
    <original>R</original>
    <variation>C</variation>
    <location>
        <position position="388"/>
    </location>
</feature>
<feature type="sequence variant" description="In strain: X.">
    <original>V</original>
    <variation>S</variation>
    <location>
        <position position="391"/>
    </location>
</feature>
<feature type="sequence variant" description="In strain: X.">
    <original>AAG</original>
    <variation>GVD</variation>
    <location>
        <begin position="406"/>
        <end position="408"/>
    </location>
</feature>
<feature type="sequence variant" description="In strain: X.">
    <original>A</original>
    <variation>R</variation>
    <location>
        <position position="411"/>
    </location>
</feature>
<feature type="sequence variant" description="In strain: X.">
    <original>V</original>
    <variation>A</variation>
    <location>
        <position position="413"/>
    </location>
</feature>
<feature type="sequence variant" description="In strain: X.">
    <original>H</original>
    <variation>K</variation>
    <location>
        <position position="417"/>
    </location>
</feature>
<feature type="sequence variant" description="In strain: X.">
    <original>S</original>
    <variation>P</variation>
    <location>
        <position position="424"/>
    </location>
</feature>
<feature type="sequence variant" description="In strain: X.">
    <original>T</original>
    <variation>A</variation>
    <location>
        <position position="436"/>
    </location>
</feature>
<feature type="sequence variant" description="In strain: X.">
    <original>T</original>
    <variation>V</variation>
    <location>
        <position position="442"/>
    </location>
</feature>
<feature type="sequence variant" description="In strain: X.">
    <original>A</original>
    <variation>E</variation>
    <location>
        <position position="456"/>
    </location>
</feature>
<feature type="sequence variant" description="In strain: X.">
    <original>E</original>
    <variation>R</variation>
    <location>
        <position position="459"/>
    </location>
</feature>
<feature type="sequence variant" description="In strain: X.">
    <original>LM</original>
    <variation>FL</variation>
    <location>
        <begin position="461"/>
        <end position="462"/>
    </location>
</feature>
<feature type="sequence variant" description="In strain: X.">
    <original>T</original>
    <variation>V</variation>
    <location>
        <position position="475"/>
    </location>
</feature>
<feature type="sequence variant" description="In strain: X.">
    <original>AG</original>
    <variation>SS</variation>
    <location>
        <begin position="482"/>
        <end position="483"/>
    </location>
</feature>
<feature type="sequence variant" description="In strain: X.">
    <original>N</original>
    <variation>E</variation>
    <location>
        <position position="487"/>
    </location>
</feature>
<feature type="sequence variant" description="In strain: X.">
    <original>T</original>
    <variation>A</variation>
    <location>
        <position position="491"/>
    </location>
</feature>
<feature type="sequence variant" description="In strain: X.">
    <original>A</original>
    <variation>K</variation>
    <location>
        <position position="505"/>
    </location>
</feature>
<feature type="sequence variant" description="In strain: X.">
    <original>T</original>
    <variation>R</variation>
    <location>
        <position position="508"/>
    </location>
</feature>
<feature type="sequence variant" description="In strain: X.">
    <original>Q</original>
    <variation>K</variation>
    <location>
        <position position="510"/>
    </location>
</feature>
<feature type="sequence variant" description="In strain: X.">
    <original>QA</original>
    <variation>GT</variation>
    <location>
        <begin position="512"/>
        <end position="513"/>
    </location>
</feature>
<feature type="sequence variant" description="In strain: X.">
    <original>R</original>
    <variation>Q</variation>
    <location>
        <position position="516"/>
    </location>
</feature>
<feature type="sequence variant" description="In strain: X.">
    <original>TV</original>
    <variation>VI</variation>
    <location>
        <begin position="536"/>
        <end position="537"/>
    </location>
</feature>
<feature type="sequence variant" description="In strain: X.">
    <original>D</original>
    <variation>E</variation>
    <location>
        <position position="540"/>
    </location>
</feature>
<feature type="sequence variant" description="In strain: X.">
    <original>H</original>
    <variation>Y</variation>
    <location>
        <position position="567"/>
    </location>
</feature>
<feature type="sequence variant" description="In strain: X.">
    <original>H</original>
    <variation>N</variation>
    <location>
        <position position="573"/>
    </location>
</feature>
<feature type="sequence variant" description="In strain: X.">
    <original>H</original>
    <variation>R</variation>
    <location>
        <position position="596"/>
    </location>
</feature>
<feature type="sequence variant" description="In strain: X.">
    <original>V</original>
    <variation>D</variation>
    <location>
        <position position="598"/>
    </location>
</feature>
<feature type="sequence variant" description="In strain: X.">
    <original>G</original>
    <variation>K</variation>
    <location>
        <position position="600"/>
    </location>
</feature>
<feature type="sequence variant" description="In strain: X.">
    <original>M</original>
    <variation>I</variation>
    <location>
        <position position="605"/>
    </location>
</feature>
<feature type="sequence variant" description="In strain: X.">
    <original>V</original>
    <variation>T</variation>
    <location>
        <position position="619"/>
    </location>
</feature>
<feature type="sequence variant" description="In strain: X.">
    <original>P</original>
    <variation>S</variation>
    <location>
        <position position="645"/>
    </location>
</feature>
<feature type="sequence variant" description="In strain: X.">
    <original>I</original>
    <variation>M</variation>
    <location>
        <position position="672"/>
    </location>
</feature>
<feature type="sequence variant" description="In strain: X.">
    <original>G</original>
    <variation>D</variation>
    <location>
        <position position="678"/>
    </location>
</feature>
<feature type="sequence variant" description="In strain: X.">
    <original>H</original>
    <variation>Q</variation>
    <location>
        <position position="691"/>
    </location>
</feature>
<feature type="sequence variant" description="In strain: X.">
    <original>ED</original>
    <variation>DE</variation>
    <location>
        <begin position="695"/>
        <end position="696"/>
    </location>
</feature>
<feature type="sequence variant" description="In strain: X.">
    <original>A</original>
    <variation>P</variation>
    <location>
        <position position="699"/>
    </location>
</feature>
<feature type="sequence variant" description="In strain: X.">
    <original>T</original>
    <variation>S</variation>
    <location>
        <position position="728"/>
    </location>
</feature>
<feature type="sequence variant" description="In strain: X.">
    <original>A</original>
    <variation>E</variation>
    <location>
        <position position="741"/>
    </location>
</feature>
<feature type="sequence variant" description="In strain: X.">
    <original>Q</original>
    <variation>R</variation>
    <location>
        <position position="748"/>
    </location>
</feature>
<feature type="sequence variant" description="In strain: X.">
    <original>D</original>
    <variation>E</variation>
    <location>
        <position position="751"/>
    </location>
</feature>
<feature type="sequence variant" description="In strain: X.">
    <original>T</original>
    <variation>M</variation>
    <location>
        <position position="790"/>
    </location>
</feature>
<feature type="sequence variant" description="In strain: X.">
    <original>SV</original>
    <variation>NA</variation>
    <location>
        <begin position="812"/>
        <end position="813"/>
    </location>
</feature>
<feature type="sequence variant" description="In strain: X.">
    <original>R</original>
    <variation>K</variation>
    <location>
        <position position="816"/>
    </location>
</feature>
<feature type="sequence variant" description="In strain: X.">
    <original>I</original>
    <variation>M</variation>
    <location>
        <position position="841"/>
    </location>
</feature>
<feature type="sequence variant" description="In strain: X.">
    <original>P</original>
    <variation>S</variation>
    <location>
        <position position="870"/>
    </location>
</feature>
<feature type="mutagenesis site" description="Complete loss of 5'-3' exonuclease activity." evidence="1">
    <original>Y</original>
    <variation>A</variation>
    <variation>P</variation>
    <location>
        <position position="73"/>
    </location>
</feature>
<feature type="sequence conflict" description="In Ref. 2; AAA85558." evidence="3" ref="2">
    <original>L</original>
    <variation>V</variation>
    <location>
        <position position="91"/>
    </location>
</feature>
<feature type="sequence conflict" description="In Ref. 2; AAA85558." evidence="3" ref="2">
    <original>E</original>
    <variation>K</variation>
    <location>
        <position position="198"/>
    </location>
</feature>
<feature type="sequence conflict" description="In Ref. 2; AAA85558." evidence="3" ref="2">
    <original>L</original>
    <variation>V</variation>
    <location>
        <position position="352"/>
    </location>
</feature>
<feature type="sequence conflict" description="In Ref. 2; AAA85558." evidence="3" ref="2">
    <original>KW</original>
    <variation>NG</variation>
    <location>
        <begin position="381"/>
        <end position="382"/>
    </location>
</feature>
<feature type="sequence conflict" description="In Ref. 2; AAA85558." evidence="3" ref="2">
    <original>R</original>
    <variation>AGV</variation>
    <location>
        <position position="388"/>
    </location>
</feature>
<feature type="sequence conflict" description="In Ref. 2; AAA85558." evidence="3" ref="2">
    <original>H</original>
    <variation>Q</variation>
    <location>
        <position position="446"/>
    </location>
</feature>
<feature type="sequence conflict" description="In Ref. 1; AAC37139." evidence="3" ref="1">
    <original>V</original>
    <variation>A</variation>
    <location>
        <position position="448"/>
    </location>
</feature>
<feature type="sequence conflict" description="In Ref. 2; AAA85558." evidence="3" ref="2">
    <original>QP</original>
    <variation>HA</variation>
    <location>
        <begin position="479"/>
        <end position="480"/>
    </location>
</feature>
<feature type="sequence conflict" description="In Ref. 2; AAA85558." evidence="3" ref="2">
    <original>G</original>
    <variation>W</variation>
    <location>
        <position position="678"/>
    </location>
</feature>
<feature type="sequence conflict" description="In Ref. 2; AAA85558." evidence="3" ref="2">
    <original>S</original>
    <variation>T</variation>
    <location>
        <position position="785"/>
    </location>
</feature>
<feature type="sequence conflict" description="In Ref. 2; AAA85558." evidence="3" ref="2">
    <original>RL</original>
    <variation>SV</variation>
    <location>
        <begin position="814"/>
        <end position="815"/>
    </location>
</feature>
<feature type="sequence conflict" description="In Ref. 2; AAA85558." evidence="3" ref="2">
    <original>V</original>
    <variation>G</variation>
    <location>
        <position position="828"/>
    </location>
</feature>
<feature type="sequence conflict" description="In Ref. 2; AAA85558." evidence="3" ref="2">
    <original>E</original>
    <variation>G</variation>
    <location>
        <position position="842"/>
    </location>
</feature>
<feature type="sequence conflict" description="In Ref. 1; AAC37139." evidence="3" ref="1">
    <original>T</original>
    <variation>A</variation>
    <location>
        <position position="857"/>
    </location>
</feature>
<feature type="strand" evidence="5">
    <location>
        <begin position="302"/>
        <end position="306"/>
    </location>
</feature>
<feature type="helix" evidence="4">
    <location>
        <begin position="309"/>
        <end position="312"/>
    </location>
</feature>
<feature type="strand" evidence="4">
    <location>
        <begin position="314"/>
        <end position="321"/>
    </location>
</feature>
<feature type="strand" evidence="4">
    <location>
        <begin position="324"/>
        <end position="326"/>
    </location>
</feature>
<feature type="strand" evidence="4">
    <location>
        <begin position="334"/>
        <end position="339"/>
    </location>
</feature>
<feature type="strand" evidence="4">
    <location>
        <begin position="342"/>
        <end position="346"/>
    </location>
</feature>
<feature type="helix" evidence="4">
    <location>
        <begin position="348"/>
        <end position="351"/>
    </location>
</feature>
<feature type="helix" evidence="4">
    <location>
        <begin position="355"/>
        <end position="362"/>
    </location>
</feature>
<feature type="strand" evidence="4">
    <location>
        <begin position="366"/>
        <end position="372"/>
    </location>
</feature>
<feature type="helix" evidence="4">
    <location>
        <begin position="373"/>
        <end position="381"/>
    </location>
</feature>
<feature type="turn" evidence="4">
    <location>
        <begin position="382"/>
        <end position="384"/>
    </location>
</feature>
<feature type="strand" evidence="4">
    <location>
        <begin position="390"/>
        <end position="393"/>
    </location>
</feature>
<feature type="helix" evidence="4">
    <location>
        <begin position="394"/>
        <end position="401"/>
    </location>
</feature>
<feature type="helix" evidence="4">
    <location>
        <begin position="403"/>
        <end position="405"/>
    </location>
</feature>
<feature type="helix" evidence="4">
    <location>
        <begin position="410"/>
        <end position="415"/>
    </location>
</feature>
<feature type="turn" evidence="4">
    <location>
        <begin position="416"/>
        <end position="418"/>
    </location>
</feature>
<feature type="helix" evidence="4">
    <location>
        <begin position="425"/>
        <end position="429"/>
    </location>
</feature>
<feature type="helix" evidence="4">
    <location>
        <begin position="432"/>
        <end position="434"/>
    </location>
</feature>
<feature type="helix" evidence="4">
    <location>
        <begin position="440"/>
        <end position="467"/>
    </location>
</feature>
<feature type="helix" evidence="4">
    <location>
        <begin position="471"/>
        <end position="476"/>
    </location>
</feature>
<feature type="helix" evidence="4">
    <location>
        <begin position="478"/>
        <end position="491"/>
    </location>
</feature>
<feature type="strand" evidence="4">
    <location>
        <begin position="493"/>
        <end position="495"/>
    </location>
</feature>
<feature type="helix" evidence="4">
    <location>
        <begin position="497"/>
        <end position="522"/>
    </location>
</feature>
<feature type="helix" evidence="4">
    <location>
        <begin position="531"/>
        <end position="539"/>
    </location>
</feature>
<feature type="strand" evidence="7">
    <location>
        <begin position="548"/>
        <end position="550"/>
    </location>
</feature>
<feature type="strand" evidence="4">
    <location>
        <begin position="551"/>
        <end position="554"/>
    </location>
</feature>
<feature type="helix" evidence="4">
    <location>
        <begin position="558"/>
        <end position="564"/>
    </location>
</feature>
<feature type="helix" evidence="4">
    <location>
        <begin position="565"/>
        <end position="567"/>
    </location>
</feature>
<feature type="helix" evidence="4">
    <location>
        <begin position="570"/>
        <end position="587"/>
    </location>
</feature>
<feature type="helix" evidence="4">
    <location>
        <begin position="589"/>
        <end position="594"/>
    </location>
</feature>
<feature type="turn" evidence="4">
    <location>
        <begin position="597"/>
        <end position="599"/>
    </location>
</feature>
<feature type="strand" evidence="4">
    <location>
        <begin position="605"/>
        <end position="609"/>
    </location>
</feature>
<feature type="strand" evidence="4">
    <location>
        <begin position="612"/>
        <end position="614"/>
    </location>
</feature>
<feature type="strand" evidence="4">
    <location>
        <begin position="617"/>
        <end position="621"/>
    </location>
</feature>
<feature type="helix" evidence="6">
    <location>
        <begin position="623"/>
        <end position="625"/>
    </location>
</feature>
<feature type="strand" evidence="6">
    <location>
        <begin position="628"/>
        <end position="630"/>
    </location>
</feature>
<feature type="helix" evidence="4">
    <location>
        <begin position="631"/>
        <end position="634"/>
    </location>
</feature>
<feature type="helix" evidence="4">
    <location>
        <begin position="635"/>
        <end position="639"/>
    </location>
</feature>
<feature type="strand" evidence="4">
    <location>
        <begin position="647"/>
        <end position="656"/>
    </location>
</feature>
<feature type="helix" evidence="4">
    <location>
        <begin position="657"/>
        <end position="666"/>
    </location>
</feature>
<feature type="helix" evidence="4">
    <location>
        <begin position="669"/>
        <end position="676"/>
    </location>
</feature>
<feature type="helix" evidence="4">
    <location>
        <begin position="681"/>
        <end position="689"/>
    </location>
</feature>
<feature type="helix" evidence="4">
    <location>
        <begin position="694"/>
        <end position="696"/>
    </location>
</feature>
<feature type="helix" evidence="4">
    <location>
        <begin position="699"/>
        <end position="714"/>
    </location>
</feature>
<feature type="helix" evidence="4">
    <location>
        <begin position="718"/>
        <end position="725"/>
    </location>
</feature>
<feature type="helix" evidence="4">
    <location>
        <begin position="729"/>
        <end position="742"/>
    </location>
</feature>
<feature type="helix" evidence="4">
    <location>
        <begin position="744"/>
        <end position="760"/>
    </location>
</feature>
<feature type="strand" evidence="4">
    <location>
        <begin position="761"/>
        <end position="764"/>
    </location>
</feature>
<feature type="strand" evidence="4">
    <location>
        <begin position="770"/>
        <end position="772"/>
    </location>
</feature>
<feature type="helix" evidence="4">
    <location>
        <begin position="774"/>
        <end position="777"/>
    </location>
</feature>
<feature type="helix" evidence="4">
    <location>
        <begin position="781"/>
        <end position="817"/>
    </location>
</feature>
<feature type="strand" evidence="4">
    <location>
        <begin position="823"/>
        <end position="827"/>
    </location>
</feature>
<feature type="strand" evidence="4">
    <location>
        <begin position="829"/>
        <end position="837"/>
    </location>
</feature>
<feature type="helix" evidence="4">
    <location>
        <begin position="838"/>
        <end position="840"/>
    </location>
</feature>
<feature type="helix" evidence="4">
    <location>
        <begin position="841"/>
        <end position="853"/>
    </location>
</feature>
<feature type="strand" evidence="4">
    <location>
        <begin position="864"/>
        <end position="871"/>
    </location>
</feature>
<feature type="turn" evidence="4">
    <location>
        <begin position="872"/>
        <end position="874"/>
    </location>
</feature>
<sequence>MKNKLVLIDGNSVAYRAFFALPLLHNDKGIHTNAVYGFTMMLNKILAEEQPTHILVAFDAGKTTFRHETFQDYKGGRQQTPPELSEQFPLLRELLKAYRIPAYELDHYEADDIIGTMAARAEREGFAVKVISGDRDLTQLASPQVTVEITKKGITDIESYTPETVVEKYGLTPEQIVDLKGLMGDKSDNIPGVPGIGEKTAVKLLKQFGTVENVLASIDEIKGEKLKENLRQYRDLALLSKQLAAICRDAPVELTLDDIVYKGEDREKVVALFQELGFQSFLDKMAVQTDEGEKPLAGMDFAIADSVTDEMLADKAALVVEVVGDNYHHAPIVGIALANERGRFFLRPETALADPKFLAWLGDETKKKTMFDSKRAAVALKWKGIELRGVVFDLLLAAYLLDPAQAAGDVAAVAKMHQYEAVRSDEAVYGKGAKRTVPDEPTLAEHLVRKAAAIWALEEPLMDELRRNEQDRLLTELEQPLAGILANMEFTGVKVDTKRLEQMGAELTEQLQAVERRIYELAGQEFNINSPKQLGTVLFDKLQLPVLKKTKTGYSTSADVLEKLAPHHEIVEHILHYRQLGKLQSTYIEGLLKVVHPVTGKVHTMFNQALTQTGRLSSVEPNLQNIPIRLEEGRKIRQAFVPSEPDWLIFAADYSQIELRVLAHIAEDDNLIEAFRRGLDIHTKTAMDIFHVSEEDVTANMRRQAKAVNFGIVYGISDYGLAQNLNITRKEAAEFIERYFASFPGVKQYMDNIVQEAKQKGYVTTLLHRRRYLPDITSRNFNVRSFAERTAMNTPIQGSAADIIKKAMIDLSVRLREERLQARLLLQVHDELILEAPKEEIERLCRLVPEVMEQAVTLRVPLKVDYHYGPTWYDAK</sequence>
<comment type="function">
    <text evidence="1 2">In addition to polymerase activity, the recombinant enzyme has strand displacement and 5'-3' exonuclease activity, but lacks proofreading 3'-5' exonuclease activity.</text>
</comment>
<comment type="catalytic activity">
    <reaction evidence="1 2">
        <text>DNA(n) + a 2'-deoxyribonucleoside 5'-triphosphate = DNA(n+1) + diphosphate</text>
        <dbReference type="Rhea" id="RHEA:22508"/>
        <dbReference type="Rhea" id="RHEA-COMP:17339"/>
        <dbReference type="Rhea" id="RHEA-COMP:17340"/>
        <dbReference type="ChEBI" id="CHEBI:33019"/>
        <dbReference type="ChEBI" id="CHEBI:61560"/>
        <dbReference type="ChEBI" id="CHEBI:173112"/>
        <dbReference type="EC" id="2.7.7.7"/>
    </reaction>
</comment>
<comment type="biophysicochemical properties">
    <temperatureDependence>
        <text evidence="2">Optimum temperature is 65 degrees Celsius.</text>
    </temperatureDependence>
</comment>
<comment type="subunit">
    <text evidence="1">Single-chain monomer with multiple functions.</text>
</comment>
<comment type="miscellaneous">
    <text evidence="1">The enzyme from this organism does not have any 3'-5' exonuclease activity. The subtilisin large fragment (residues 289-876) has wild-type polymerase activity but no 5'-3' exonuclease activity.</text>
</comment>
<comment type="similarity">
    <text evidence="3">Belongs to the DNA polymerase type-A family.</text>
</comment>
<comment type="caution">
    <text evidence="3">PubMed:9016716 and PubMed:9440698 strain is not known and has been termed 'X' in this entry.</text>
</comment>
<comment type="sequence caution" evidence="3">
    <conflict type="erroneous initiation">
        <sequence resource="EMBL-CDS" id="AAA85558"/>
    </conflict>
</comment>
<keyword id="KW-0002">3D-structure</keyword>
<keyword id="KW-0903">Direct protein sequencing</keyword>
<keyword id="KW-0227">DNA damage</keyword>
<keyword id="KW-0234">DNA repair</keyword>
<keyword id="KW-0235">DNA replication</keyword>
<keyword id="KW-0238">DNA-binding</keyword>
<keyword id="KW-0239">DNA-directed DNA polymerase</keyword>
<keyword id="KW-0269">Exonuclease</keyword>
<keyword id="KW-0378">Hydrolase</keyword>
<keyword id="KW-0540">Nuclease</keyword>
<keyword id="KW-0548">Nucleotidyltransferase</keyword>
<keyword id="KW-0808">Transferase</keyword>